<gene>
    <name type="primary">IDH5</name>
    <name type="ordered locus">At5g03290</name>
    <name type="ORF">F12E4_20</name>
    <name type="ORF">MOK16.20</name>
</gene>
<name>IDH5_ARATH</name>
<organism>
    <name type="scientific">Arabidopsis thaliana</name>
    <name type="common">Mouse-ear cress</name>
    <dbReference type="NCBI Taxonomy" id="3702"/>
    <lineage>
        <taxon>Eukaryota</taxon>
        <taxon>Viridiplantae</taxon>
        <taxon>Streptophyta</taxon>
        <taxon>Embryophyta</taxon>
        <taxon>Tracheophyta</taxon>
        <taxon>Spermatophyta</taxon>
        <taxon>Magnoliopsida</taxon>
        <taxon>eudicotyledons</taxon>
        <taxon>Gunneridae</taxon>
        <taxon>Pentapetalae</taxon>
        <taxon>rosids</taxon>
        <taxon>malvids</taxon>
        <taxon>Brassicales</taxon>
        <taxon>Brassicaceae</taxon>
        <taxon>Camelineae</taxon>
        <taxon>Arabidopsis</taxon>
    </lineage>
</organism>
<protein>
    <recommendedName>
        <fullName>Isocitrate dehydrogenase [NAD] catalytic subunit 5, mitochondrial</fullName>
        <ecNumber evidence="8">1.1.1.41</ecNumber>
    </recommendedName>
    <alternativeName>
        <fullName>IDH-V</fullName>
    </alternativeName>
    <alternativeName>
        <fullName>Isocitric dehydrogenase 5</fullName>
    </alternativeName>
    <alternativeName>
        <fullName>NAD(+)-specific ICDH 5</fullName>
    </alternativeName>
</protein>
<accession>Q945K7</accession>
<accession>Q9LZG1</accession>
<comment type="function">
    <text evidence="3">Performs an essential role in the oxidative function of the citric acid cycle.</text>
</comment>
<comment type="catalytic activity">
    <reaction evidence="8">
        <text>D-threo-isocitrate + NAD(+) = 2-oxoglutarate + CO2 + NADH</text>
        <dbReference type="Rhea" id="RHEA:23632"/>
        <dbReference type="ChEBI" id="CHEBI:15562"/>
        <dbReference type="ChEBI" id="CHEBI:16526"/>
        <dbReference type="ChEBI" id="CHEBI:16810"/>
        <dbReference type="ChEBI" id="CHEBI:57540"/>
        <dbReference type="ChEBI" id="CHEBI:57945"/>
        <dbReference type="EC" id="1.1.1.41"/>
    </reaction>
</comment>
<comment type="cofactor">
    <cofactor evidence="1">
        <name>Mg(2+)</name>
        <dbReference type="ChEBI" id="CHEBI:18420"/>
    </cofactor>
    <cofactor evidence="1">
        <name>Mn(2+)</name>
        <dbReference type="ChEBI" id="CHEBI:29035"/>
    </cofactor>
    <text evidence="1">Binds 1 Mg(2+) or Mn(2+) ion per subunit.</text>
</comment>
<comment type="subunit">
    <text evidence="8">Heterooligomer of catalytic and regulatory subunits.</text>
</comment>
<comment type="subcellular location">
    <subcellularLocation>
        <location evidence="5">Mitochondrion</location>
    </subcellularLocation>
</comment>
<comment type="tissue specificity">
    <text evidence="6">Ubiquitous.</text>
</comment>
<comment type="similarity">
    <text evidence="7">Belongs to the isocitrate and isopropylmalate dehydrogenases family.</text>
</comment>
<comment type="sequence caution" evidence="7">
    <conflict type="erroneous initiation">
        <sequence resource="EMBL-CDS" id="BAB08389"/>
    </conflict>
    <text>Extended N-terminus.</text>
</comment>
<comment type="sequence caution" evidence="7">
    <conflict type="erroneous initiation">
        <sequence resource="EMBL-CDS" id="CAB83285"/>
    </conflict>
    <text>Extended N-terminus.</text>
</comment>
<feature type="transit peptide" description="Mitochondrion" evidence="4">
    <location>
        <begin position="1"/>
        <end position="44"/>
    </location>
</feature>
<feature type="chain" id="PRO_0000271291" description="Isocitrate dehydrogenase [NAD] catalytic subunit 5, mitochondrial">
    <location>
        <begin position="45"/>
        <end position="374"/>
    </location>
</feature>
<feature type="binding site" evidence="1">
    <location>
        <position position="127"/>
    </location>
    <ligand>
        <name>substrate</name>
    </ligand>
</feature>
<feature type="binding site" evidence="1">
    <location>
        <position position="137"/>
    </location>
    <ligand>
        <name>substrate</name>
    </ligand>
</feature>
<feature type="binding site" evidence="1">
    <location>
        <position position="158"/>
    </location>
    <ligand>
        <name>substrate</name>
    </ligand>
</feature>
<feature type="binding site" evidence="2">
    <location>
        <position position="245"/>
    </location>
    <ligand>
        <name>Mg(2+)</name>
        <dbReference type="ChEBI" id="CHEBI:18420"/>
    </ligand>
</feature>
<feature type="binding site" evidence="1">
    <location>
        <position position="245"/>
    </location>
    <ligand>
        <name>substrate</name>
    </ligand>
</feature>
<feature type="binding site" evidence="2">
    <location>
        <position position="269"/>
    </location>
    <ligand>
        <name>Mg(2+)</name>
        <dbReference type="ChEBI" id="CHEBI:18420"/>
    </ligand>
</feature>
<feature type="binding site" evidence="2">
    <location>
        <position position="273"/>
    </location>
    <ligand>
        <name>Mg(2+)</name>
        <dbReference type="ChEBI" id="CHEBI:18420"/>
    </ligand>
</feature>
<feature type="site" description="Critical for catalysis" evidence="1">
    <location>
        <position position="165"/>
    </location>
</feature>
<feature type="site" description="Critical for catalysis" evidence="1">
    <location>
        <position position="212"/>
    </location>
</feature>
<reference key="1">
    <citation type="journal article" date="1997" name="DNA Res.">
        <title>Structural analysis of Arabidopsis thaliana chromosome 5. I. Sequence features of the 1.6 Mb regions covered by twenty physically assigned P1 clones.</title>
        <authorList>
            <person name="Sato S."/>
            <person name="Kotani H."/>
            <person name="Nakamura Y."/>
            <person name="Kaneko T."/>
            <person name="Asamizu E."/>
            <person name="Fukami M."/>
            <person name="Miyajima N."/>
            <person name="Tabata S."/>
        </authorList>
    </citation>
    <scope>NUCLEOTIDE SEQUENCE [LARGE SCALE GENOMIC DNA]</scope>
    <source>
        <strain>cv. Columbia</strain>
    </source>
</reference>
<reference key="2">
    <citation type="journal article" date="2000" name="Nature">
        <title>Sequence and analysis of chromosome 5 of the plant Arabidopsis thaliana.</title>
        <authorList>
            <person name="Tabata S."/>
            <person name="Kaneko T."/>
            <person name="Nakamura Y."/>
            <person name="Kotani H."/>
            <person name="Kato T."/>
            <person name="Asamizu E."/>
            <person name="Miyajima N."/>
            <person name="Sasamoto S."/>
            <person name="Kimura T."/>
            <person name="Hosouchi T."/>
            <person name="Kawashima K."/>
            <person name="Kohara M."/>
            <person name="Matsumoto M."/>
            <person name="Matsuno A."/>
            <person name="Muraki A."/>
            <person name="Nakayama S."/>
            <person name="Nakazaki N."/>
            <person name="Naruo K."/>
            <person name="Okumura S."/>
            <person name="Shinpo S."/>
            <person name="Takeuchi C."/>
            <person name="Wada T."/>
            <person name="Watanabe A."/>
            <person name="Yamada M."/>
            <person name="Yasuda M."/>
            <person name="Sato S."/>
            <person name="de la Bastide M."/>
            <person name="Huang E."/>
            <person name="Spiegel L."/>
            <person name="Gnoj L."/>
            <person name="O'Shaughnessy A."/>
            <person name="Preston R."/>
            <person name="Habermann K."/>
            <person name="Murray J."/>
            <person name="Johnson D."/>
            <person name="Rohlfing T."/>
            <person name="Nelson J."/>
            <person name="Stoneking T."/>
            <person name="Pepin K."/>
            <person name="Spieth J."/>
            <person name="Sekhon M."/>
            <person name="Armstrong J."/>
            <person name="Becker M."/>
            <person name="Belter E."/>
            <person name="Cordum H."/>
            <person name="Cordes M."/>
            <person name="Courtney L."/>
            <person name="Courtney W."/>
            <person name="Dante M."/>
            <person name="Du H."/>
            <person name="Edwards J."/>
            <person name="Fryman J."/>
            <person name="Haakensen B."/>
            <person name="Lamar E."/>
            <person name="Latreille P."/>
            <person name="Leonard S."/>
            <person name="Meyer R."/>
            <person name="Mulvaney E."/>
            <person name="Ozersky P."/>
            <person name="Riley A."/>
            <person name="Strowmatt C."/>
            <person name="Wagner-McPherson C."/>
            <person name="Wollam A."/>
            <person name="Yoakum M."/>
            <person name="Bell M."/>
            <person name="Dedhia N."/>
            <person name="Parnell L."/>
            <person name="Shah R."/>
            <person name="Rodriguez M."/>
            <person name="Hoon See L."/>
            <person name="Vil D."/>
            <person name="Baker J."/>
            <person name="Kirchoff K."/>
            <person name="Toth K."/>
            <person name="King L."/>
            <person name="Bahret A."/>
            <person name="Miller B."/>
            <person name="Marra M.A."/>
            <person name="Martienssen R."/>
            <person name="McCombie W.R."/>
            <person name="Wilson R.K."/>
            <person name="Murphy G."/>
            <person name="Bancroft I."/>
            <person name="Volckaert G."/>
            <person name="Wambutt R."/>
            <person name="Duesterhoeft A."/>
            <person name="Stiekema W."/>
            <person name="Pohl T."/>
            <person name="Entian K.-D."/>
            <person name="Terryn N."/>
            <person name="Hartley N."/>
            <person name="Bent E."/>
            <person name="Johnson S."/>
            <person name="Langham S.-A."/>
            <person name="McCullagh B."/>
            <person name="Robben J."/>
            <person name="Grymonprez B."/>
            <person name="Zimmermann W."/>
            <person name="Ramsperger U."/>
            <person name="Wedler H."/>
            <person name="Balke K."/>
            <person name="Wedler E."/>
            <person name="Peters S."/>
            <person name="van Staveren M."/>
            <person name="Dirkse W."/>
            <person name="Mooijman P."/>
            <person name="Klein Lankhorst R."/>
            <person name="Weitzenegger T."/>
            <person name="Bothe G."/>
            <person name="Rose M."/>
            <person name="Hauf J."/>
            <person name="Berneiser S."/>
            <person name="Hempel S."/>
            <person name="Feldpausch M."/>
            <person name="Lamberth S."/>
            <person name="Villarroel R."/>
            <person name="Gielen J."/>
            <person name="Ardiles W."/>
            <person name="Bents O."/>
            <person name="Lemcke K."/>
            <person name="Kolesov G."/>
            <person name="Mayer K.F.X."/>
            <person name="Rudd S."/>
            <person name="Schoof H."/>
            <person name="Schueller C."/>
            <person name="Zaccaria P."/>
            <person name="Mewes H.-W."/>
            <person name="Bevan M."/>
            <person name="Fransz P.F."/>
        </authorList>
    </citation>
    <scope>NUCLEOTIDE SEQUENCE [LARGE SCALE GENOMIC DNA]</scope>
    <source>
        <strain>cv. Columbia</strain>
    </source>
</reference>
<reference key="3">
    <citation type="journal article" date="2017" name="Plant J.">
        <title>Araport11: a complete reannotation of the Arabidopsis thaliana reference genome.</title>
        <authorList>
            <person name="Cheng C.Y."/>
            <person name="Krishnakumar V."/>
            <person name="Chan A.P."/>
            <person name="Thibaud-Nissen F."/>
            <person name="Schobel S."/>
            <person name="Town C.D."/>
        </authorList>
    </citation>
    <scope>GENOME REANNOTATION</scope>
    <source>
        <strain>cv. Columbia</strain>
    </source>
</reference>
<reference key="4">
    <citation type="journal article" date="2003" name="Science">
        <title>Empirical analysis of transcriptional activity in the Arabidopsis genome.</title>
        <authorList>
            <person name="Yamada K."/>
            <person name="Lim J."/>
            <person name="Dale J.M."/>
            <person name="Chen H."/>
            <person name="Shinn P."/>
            <person name="Palm C.J."/>
            <person name="Southwick A.M."/>
            <person name="Wu H.C."/>
            <person name="Kim C.J."/>
            <person name="Nguyen M."/>
            <person name="Pham P.K."/>
            <person name="Cheuk R.F."/>
            <person name="Karlin-Newmann G."/>
            <person name="Liu S.X."/>
            <person name="Lam B."/>
            <person name="Sakano H."/>
            <person name="Wu T."/>
            <person name="Yu G."/>
            <person name="Miranda M."/>
            <person name="Quach H.L."/>
            <person name="Tripp M."/>
            <person name="Chang C.H."/>
            <person name="Lee J.M."/>
            <person name="Toriumi M.J."/>
            <person name="Chan M.M."/>
            <person name="Tang C.C."/>
            <person name="Onodera C.S."/>
            <person name="Deng J.M."/>
            <person name="Akiyama K."/>
            <person name="Ansari Y."/>
            <person name="Arakawa T."/>
            <person name="Banh J."/>
            <person name="Banno F."/>
            <person name="Bowser L."/>
            <person name="Brooks S.Y."/>
            <person name="Carninci P."/>
            <person name="Chao Q."/>
            <person name="Choy N."/>
            <person name="Enju A."/>
            <person name="Goldsmith A.D."/>
            <person name="Gurjal M."/>
            <person name="Hansen N.F."/>
            <person name="Hayashizaki Y."/>
            <person name="Johnson-Hopson C."/>
            <person name="Hsuan V.W."/>
            <person name="Iida K."/>
            <person name="Karnes M."/>
            <person name="Khan S."/>
            <person name="Koesema E."/>
            <person name="Ishida J."/>
            <person name="Jiang P.X."/>
            <person name="Jones T."/>
            <person name="Kawai J."/>
            <person name="Kamiya A."/>
            <person name="Meyers C."/>
            <person name="Nakajima M."/>
            <person name="Narusaka M."/>
            <person name="Seki M."/>
            <person name="Sakurai T."/>
            <person name="Satou M."/>
            <person name="Tamse R."/>
            <person name="Vaysberg M."/>
            <person name="Wallender E.K."/>
            <person name="Wong C."/>
            <person name="Yamamura Y."/>
            <person name="Yuan S."/>
            <person name="Shinozaki K."/>
            <person name="Davis R.W."/>
            <person name="Theologis A."/>
            <person name="Ecker J.R."/>
        </authorList>
    </citation>
    <scope>NUCLEOTIDE SEQUENCE [LARGE SCALE MRNA]</scope>
    <source>
        <strain>cv. Columbia</strain>
    </source>
</reference>
<reference key="5">
    <citation type="journal article" date="2004" name="Plant Cell">
        <title>Experimental analysis of the Arabidopsis mitochondrial proteome highlights signaling and regulatory components, provides assessment of targeting prediction programs, and indicates plant-specific mitochondrial proteins.</title>
        <authorList>
            <person name="Heazlewood J.L."/>
            <person name="Tonti-Filippini J.S."/>
            <person name="Gout A.M."/>
            <person name="Day D.A."/>
            <person name="Whelan J."/>
            <person name="Millar A.H."/>
        </authorList>
    </citation>
    <scope>IDENTIFICATION BY MASS SPECTROMETRY</scope>
    <scope>SUBCELLULAR LOCATION [LARGE SCALE ANALYSIS]</scope>
    <source>
        <strain>cv. Landsberg erecta</strain>
    </source>
</reference>
<reference key="6">
    <citation type="journal article" date="2004" name="Plant Sci.">
        <title>Characterization of a mutation in the IDH-II subunit of the NAD(+)-dependent isocitrate dehydrogenase from Arabidopsis thaliana.</title>
        <authorList>
            <person name="Lin M."/>
            <person name="Behal R.H."/>
            <person name="Oliver D.J."/>
        </authorList>
        <dbReference type="AGRICOLA" id="IND43633651"/>
    </citation>
    <scope>GENE FAMILY</scope>
</reference>
<reference key="7">
    <citation type="journal article" date="2006" name="Plant Cell Physiol.">
        <title>Expression analysis of Arabidopsis thaliana NAD-dependent isocitrate dehydrogenase genes shows the presence of a functional subunit that is mainly expressed in the pollen and absent from vegetative organs.</title>
        <authorList>
            <person name="Lemaitre T."/>
            <person name="Hodges M."/>
        </authorList>
    </citation>
    <scope>TISSUE SPECIFICITY</scope>
    <scope>CATALYTIC ACTIVITY</scope>
    <scope>SUBUNIT</scope>
</reference>
<dbReference type="EC" id="1.1.1.41" evidence="8"/>
<dbReference type="EMBL" id="AB005240">
    <property type="protein sequence ID" value="BAB08389.1"/>
    <property type="status" value="ALT_INIT"/>
    <property type="molecule type" value="Genomic_DNA"/>
</dbReference>
<dbReference type="EMBL" id="AL162751">
    <property type="protein sequence ID" value="CAB83285.1"/>
    <property type="status" value="ALT_INIT"/>
    <property type="molecule type" value="Genomic_DNA"/>
</dbReference>
<dbReference type="EMBL" id="CP002688">
    <property type="protein sequence ID" value="AED90581.1"/>
    <property type="molecule type" value="Genomic_DNA"/>
</dbReference>
<dbReference type="EMBL" id="AF412100">
    <property type="protein sequence ID" value="AAL06553.1"/>
    <property type="molecule type" value="mRNA"/>
</dbReference>
<dbReference type="EMBL" id="AY099823">
    <property type="protein sequence ID" value="AAM20674.1"/>
    <property type="molecule type" value="mRNA"/>
</dbReference>
<dbReference type="EMBL" id="BT008460">
    <property type="protein sequence ID" value="AAP37819.1"/>
    <property type="molecule type" value="mRNA"/>
</dbReference>
<dbReference type="PIR" id="T48350">
    <property type="entry name" value="T48350"/>
</dbReference>
<dbReference type="RefSeq" id="NP_568113.1">
    <property type="nucleotide sequence ID" value="NM_120407.6"/>
</dbReference>
<dbReference type="SMR" id="Q945K7"/>
<dbReference type="BioGRID" id="17160">
    <property type="interactions" value="3"/>
</dbReference>
<dbReference type="FunCoup" id="Q945K7">
    <property type="interactions" value="3204"/>
</dbReference>
<dbReference type="IntAct" id="Q945K7">
    <property type="interactions" value="1"/>
</dbReference>
<dbReference type="STRING" id="3702.Q945K7"/>
<dbReference type="PaxDb" id="3702-AT5G03290.1"/>
<dbReference type="ProteomicsDB" id="248618"/>
<dbReference type="EnsemblPlants" id="AT5G03290.1">
    <property type="protein sequence ID" value="AT5G03290.1"/>
    <property type="gene ID" value="AT5G03290"/>
</dbReference>
<dbReference type="GeneID" id="831884"/>
<dbReference type="Gramene" id="AT5G03290.1">
    <property type="protein sequence ID" value="AT5G03290.1"/>
    <property type="gene ID" value="AT5G03290"/>
</dbReference>
<dbReference type="KEGG" id="ath:AT5G03290"/>
<dbReference type="Araport" id="AT5G03290"/>
<dbReference type="TAIR" id="AT5G03290">
    <property type="gene designation" value="IDH-V"/>
</dbReference>
<dbReference type="eggNOG" id="KOG0785">
    <property type="taxonomic scope" value="Eukaryota"/>
</dbReference>
<dbReference type="HOGENOM" id="CLU_031953_0_1_1"/>
<dbReference type="InParanoid" id="Q945K7"/>
<dbReference type="OMA" id="VRPCRYY"/>
<dbReference type="PhylomeDB" id="Q945K7"/>
<dbReference type="BioCyc" id="MetaCyc:AT5G03290-MONOMER"/>
<dbReference type="BRENDA" id="1.1.1.41">
    <property type="organism ID" value="399"/>
</dbReference>
<dbReference type="PRO" id="PR:Q945K7"/>
<dbReference type="Proteomes" id="UP000006548">
    <property type="component" value="Chromosome 5"/>
</dbReference>
<dbReference type="ExpressionAtlas" id="Q945K7">
    <property type="expression patterns" value="baseline and differential"/>
</dbReference>
<dbReference type="GO" id="GO:0005739">
    <property type="term" value="C:mitochondrion"/>
    <property type="evidence" value="ECO:0007005"/>
    <property type="project" value="TAIR"/>
</dbReference>
<dbReference type="GO" id="GO:0005886">
    <property type="term" value="C:plasma membrane"/>
    <property type="evidence" value="ECO:0007005"/>
    <property type="project" value="TAIR"/>
</dbReference>
<dbReference type="GO" id="GO:0005524">
    <property type="term" value="F:ATP binding"/>
    <property type="evidence" value="ECO:0007005"/>
    <property type="project" value="TAIR"/>
</dbReference>
<dbReference type="GO" id="GO:0004449">
    <property type="term" value="F:isocitrate dehydrogenase (NAD+) activity"/>
    <property type="evidence" value="ECO:0000315"/>
    <property type="project" value="TAIR"/>
</dbReference>
<dbReference type="GO" id="GO:0000287">
    <property type="term" value="F:magnesium ion binding"/>
    <property type="evidence" value="ECO:0007669"/>
    <property type="project" value="InterPro"/>
</dbReference>
<dbReference type="GO" id="GO:0051287">
    <property type="term" value="F:NAD binding"/>
    <property type="evidence" value="ECO:0007669"/>
    <property type="project" value="InterPro"/>
</dbReference>
<dbReference type="GO" id="GO:0008270">
    <property type="term" value="F:zinc ion binding"/>
    <property type="evidence" value="ECO:0007005"/>
    <property type="project" value="TAIR"/>
</dbReference>
<dbReference type="GO" id="GO:0006102">
    <property type="term" value="P:isocitrate metabolic process"/>
    <property type="evidence" value="ECO:0000315"/>
    <property type="project" value="TAIR"/>
</dbReference>
<dbReference type="GO" id="GO:0006099">
    <property type="term" value="P:tricarboxylic acid cycle"/>
    <property type="evidence" value="ECO:0000304"/>
    <property type="project" value="TAIR"/>
</dbReference>
<dbReference type="FunFam" id="3.40.718.10:FF:000003">
    <property type="entry name" value="Isocitrate dehydrogenase [NAD] subunit, mitochondrial"/>
    <property type="match status" value="1"/>
</dbReference>
<dbReference type="Gene3D" id="3.40.718.10">
    <property type="entry name" value="Isopropylmalate Dehydrogenase"/>
    <property type="match status" value="1"/>
</dbReference>
<dbReference type="InterPro" id="IPR019818">
    <property type="entry name" value="IsoCit/isopropylmalate_DH_CS"/>
</dbReference>
<dbReference type="InterPro" id="IPR004434">
    <property type="entry name" value="Isocitrate_DH_NAD"/>
</dbReference>
<dbReference type="InterPro" id="IPR024084">
    <property type="entry name" value="IsoPropMal-DH-like_dom"/>
</dbReference>
<dbReference type="NCBIfam" id="TIGR00175">
    <property type="entry name" value="mito_nad_idh"/>
    <property type="match status" value="1"/>
</dbReference>
<dbReference type="PANTHER" id="PTHR11835">
    <property type="entry name" value="DECARBOXYLATING DEHYDROGENASES-ISOCITRATE, ISOPROPYLMALATE, TARTRATE"/>
    <property type="match status" value="1"/>
</dbReference>
<dbReference type="PANTHER" id="PTHR11835:SF34">
    <property type="entry name" value="ISOCITRATE DEHYDROGENASE [NAD] SUBUNIT ALPHA, MITOCHONDRIAL"/>
    <property type="match status" value="1"/>
</dbReference>
<dbReference type="Pfam" id="PF00180">
    <property type="entry name" value="Iso_dh"/>
    <property type="match status" value="1"/>
</dbReference>
<dbReference type="SMART" id="SM01329">
    <property type="entry name" value="Iso_dh"/>
    <property type="match status" value="1"/>
</dbReference>
<dbReference type="SUPFAM" id="SSF53659">
    <property type="entry name" value="Isocitrate/Isopropylmalate dehydrogenase-like"/>
    <property type="match status" value="1"/>
</dbReference>
<dbReference type="PROSITE" id="PS00470">
    <property type="entry name" value="IDH_IMDH"/>
    <property type="match status" value="1"/>
</dbReference>
<evidence type="ECO:0000250" key="1"/>
<evidence type="ECO:0000250" key="2">
    <source>
        <dbReference type="UniProtKB" id="P50213"/>
    </source>
</evidence>
<evidence type="ECO:0000250" key="3">
    <source>
        <dbReference type="UniProtKB" id="P93032"/>
    </source>
</evidence>
<evidence type="ECO:0000255" key="4"/>
<evidence type="ECO:0000269" key="5">
    <source>
    </source>
</evidence>
<evidence type="ECO:0000269" key="6">
    <source>
    </source>
</evidence>
<evidence type="ECO:0000305" key="7"/>
<evidence type="ECO:0000305" key="8">
    <source>
    </source>
</evidence>
<keyword id="KW-0460">Magnesium</keyword>
<keyword id="KW-0464">Manganese</keyword>
<keyword id="KW-0479">Metal-binding</keyword>
<keyword id="KW-0496">Mitochondrion</keyword>
<keyword id="KW-0520">NAD</keyword>
<keyword id="KW-0560">Oxidoreductase</keyword>
<keyword id="KW-1185">Reference proteome</keyword>
<keyword id="KW-0809">Transit peptide</keyword>
<keyword id="KW-0816">Tricarboxylic acid cycle</keyword>
<proteinExistence type="evidence at protein level"/>
<sequence>MTMAANLARRLIGNRSTQILGAVNSSSGAASSVARAFCSSTTPITATLFPGDGIGPEIAESVKKVFTTAGVPIEWEEHYVGTEIDPRTQSFLTWESLESVRRNKVGLKGPMATPIGKGHRSLNLTLRKELNLYANVRPCYSLPGYKTRYDDVDLITIRENTEGEYSGLEHQVVRGVVESLKIITRQASLRVAEYAFLYAKTHGRERVSAIHKANIMQKTDGLFLKCCREVAEKYPEITYEEVVIDNCCMMLVKNPALFDVLVMPNLYGDIISDLCAGLVGGLGLTPSCNIGEDGVALAEAVHGSAPDIAGKNLANPTALLLSGVMMLRHLKFNEQAEQIHSAIINTIAEGKYRTADLGGSSTTTEFTKAICDHL</sequence>